<protein>
    <recommendedName>
        <fullName evidence="1">Transcription antitermination protein NusB</fullName>
    </recommendedName>
    <alternativeName>
        <fullName evidence="1">Antitermination factor NusB</fullName>
    </alternativeName>
</protein>
<name>NUSB_NITV9</name>
<gene>
    <name evidence="1" type="primary">nusB</name>
    <name type="ordered locus">DvMF_3091</name>
</gene>
<accession>B8DJF1</accession>
<organism>
    <name type="scientific">Nitratidesulfovibrio vulgaris (strain DSM 19637 / Miyazaki F)</name>
    <name type="common">Desulfovibrio vulgaris</name>
    <dbReference type="NCBI Taxonomy" id="883"/>
    <lineage>
        <taxon>Bacteria</taxon>
        <taxon>Pseudomonadati</taxon>
        <taxon>Thermodesulfobacteriota</taxon>
        <taxon>Desulfovibrionia</taxon>
        <taxon>Desulfovibrionales</taxon>
        <taxon>Desulfovibrionaceae</taxon>
        <taxon>Nitratidesulfovibrio</taxon>
    </lineage>
</organism>
<sequence length="165" mass="18143">MANQGKKPTRRSERALAFQVLYGLSFTPATSEGALRAAYAASPDVADRNAEDEKADRQAPATAPQGYAWEVIHGVWKTQAELDEAVSGFSQNWRVERMGRVELTLLRIAVYEMLFRDDVPAKVAMNEAIELSKQFGDDNSRGFINGILDAVARAVESGRLTPKGQ</sequence>
<feature type="chain" id="PRO_1000117048" description="Transcription antitermination protein NusB">
    <location>
        <begin position="1"/>
        <end position="165"/>
    </location>
</feature>
<dbReference type="EMBL" id="CP001197">
    <property type="protein sequence ID" value="ACL10028.1"/>
    <property type="molecule type" value="Genomic_DNA"/>
</dbReference>
<dbReference type="SMR" id="B8DJF1"/>
<dbReference type="STRING" id="883.DvMF_3091"/>
<dbReference type="KEGG" id="dvm:DvMF_3091"/>
<dbReference type="eggNOG" id="COG0781">
    <property type="taxonomic scope" value="Bacteria"/>
</dbReference>
<dbReference type="HOGENOM" id="CLU_087843_3_1_7"/>
<dbReference type="OrthoDB" id="9797817at2"/>
<dbReference type="GO" id="GO:0005829">
    <property type="term" value="C:cytosol"/>
    <property type="evidence" value="ECO:0007669"/>
    <property type="project" value="TreeGrafter"/>
</dbReference>
<dbReference type="GO" id="GO:0003723">
    <property type="term" value="F:RNA binding"/>
    <property type="evidence" value="ECO:0007669"/>
    <property type="project" value="UniProtKB-UniRule"/>
</dbReference>
<dbReference type="GO" id="GO:0006353">
    <property type="term" value="P:DNA-templated transcription termination"/>
    <property type="evidence" value="ECO:0007669"/>
    <property type="project" value="UniProtKB-UniRule"/>
</dbReference>
<dbReference type="GO" id="GO:0031564">
    <property type="term" value="P:transcription antitermination"/>
    <property type="evidence" value="ECO:0007669"/>
    <property type="project" value="UniProtKB-KW"/>
</dbReference>
<dbReference type="Gene3D" id="1.10.940.10">
    <property type="entry name" value="NusB-like"/>
    <property type="match status" value="1"/>
</dbReference>
<dbReference type="HAMAP" id="MF_00073">
    <property type="entry name" value="NusB"/>
    <property type="match status" value="1"/>
</dbReference>
<dbReference type="InterPro" id="IPR035926">
    <property type="entry name" value="NusB-like_sf"/>
</dbReference>
<dbReference type="InterPro" id="IPR011605">
    <property type="entry name" value="NusB_fam"/>
</dbReference>
<dbReference type="InterPro" id="IPR006027">
    <property type="entry name" value="NusB_RsmB_TIM44"/>
</dbReference>
<dbReference type="NCBIfam" id="TIGR01951">
    <property type="entry name" value="nusB"/>
    <property type="match status" value="1"/>
</dbReference>
<dbReference type="PANTHER" id="PTHR11078:SF3">
    <property type="entry name" value="ANTITERMINATION NUSB DOMAIN-CONTAINING PROTEIN"/>
    <property type="match status" value="1"/>
</dbReference>
<dbReference type="PANTHER" id="PTHR11078">
    <property type="entry name" value="N UTILIZATION SUBSTANCE PROTEIN B-RELATED"/>
    <property type="match status" value="1"/>
</dbReference>
<dbReference type="Pfam" id="PF01029">
    <property type="entry name" value="NusB"/>
    <property type="match status" value="1"/>
</dbReference>
<dbReference type="SUPFAM" id="SSF48013">
    <property type="entry name" value="NusB-like"/>
    <property type="match status" value="1"/>
</dbReference>
<evidence type="ECO:0000255" key="1">
    <source>
        <dbReference type="HAMAP-Rule" id="MF_00073"/>
    </source>
</evidence>
<comment type="function">
    <text evidence="1">Involved in transcription antitermination. Required for transcription of ribosomal RNA (rRNA) genes. Binds specifically to the boxA antiterminator sequence of the ribosomal RNA (rrn) operons.</text>
</comment>
<comment type="similarity">
    <text evidence="1">Belongs to the NusB family.</text>
</comment>
<reference key="1">
    <citation type="submission" date="2008-10" db="EMBL/GenBank/DDBJ databases">
        <title>Complete sequence of Desulfovibrio vulgaris str. 'Miyazaki F'.</title>
        <authorList>
            <person name="Lucas S."/>
            <person name="Copeland A."/>
            <person name="Lapidus A."/>
            <person name="Glavina del Rio T."/>
            <person name="Dalin E."/>
            <person name="Tice H."/>
            <person name="Bruce D."/>
            <person name="Goodwin L."/>
            <person name="Pitluck S."/>
            <person name="Sims D."/>
            <person name="Brettin T."/>
            <person name="Detter J.C."/>
            <person name="Han C."/>
            <person name="Larimer F."/>
            <person name="Land M."/>
            <person name="Hauser L."/>
            <person name="Kyrpides N."/>
            <person name="Mikhailova N."/>
            <person name="Hazen T.C."/>
            <person name="Richardson P."/>
        </authorList>
    </citation>
    <scope>NUCLEOTIDE SEQUENCE [LARGE SCALE GENOMIC DNA]</scope>
    <source>
        <strain>DSM 19637 / Miyazaki F</strain>
    </source>
</reference>
<keyword id="KW-0694">RNA-binding</keyword>
<keyword id="KW-0804">Transcription</keyword>
<keyword id="KW-0889">Transcription antitermination</keyword>
<keyword id="KW-0805">Transcription regulation</keyword>
<proteinExistence type="inferred from homology"/>